<sequence length="262" mass="28673">MKRKTVWKIWITLALIALLSITALAGCSSESSTTNKEDGAKSTETSAGTNTLEKIKKRGKLIVGVKYDLNLFGLKNPETGKVEGFDIDIAKGLAKKILGDENKIELKEVTSKTRIPMLNNGEIDAIIGTMTITEERKKEVDFSDVYFMAGQSLLVKKDSKINSVKDLKKGMTVLTAKGSTSAQNIRKVAPEVNVLEFENYAEAFTALKAGQGDALTTDNALLWGMAKQDPNYRVLDETFSKEPYGIGSAKETKNYCKSLTNT</sequence>
<gene>
    <name type="primary">glnH</name>
</gene>
<comment type="function">
    <text>Involved in glutamine-transport system. Interacts with the glutamine-transport system GlnPQ.</text>
</comment>
<comment type="subcellular location">
    <subcellularLocation>
        <location evidence="2">Cell membrane</location>
        <topology evidence="2">Lipid-anchor</topology>
    </subcellularLocation>
</comment>
<comment type="similarity">
    <text evidence="2">Belongs to the bacterial solute-binding protein 3 family.</text>
</comment>
<protein>
    <recommendedName>
        <fullName>Glutamine-binding protein</fullName>
        <shortName>GlnBP</shortName>
    </recommendedName>
</protein>
<reference key="1">
    <citation type="journal article" date="1991" name="J. Bacteriol.">
        <title>Cloning and characterization of a glutamine transport operon of Bacillus stearothermophilus NUB36: effect of temperature on regulation of transcription.</title>
        <authorList>
            <person name="Wu L."/>
            <person name="Welker N.E."/>
        </authorList>
    </citation>
    <scope>NUCLEOTIDE SEQUENCE [GENOMIC DNA]</scope>
    <source>
        <strain>NUB36</strain>
    </source>
</reference>
<organism>
    <name type="scientific">Geobacillus stearothermophilus</name>
    <name type="common">Bacillus stearothermophilus</name>
    <dbReference type="NCBI Taxonomy" id="1422"/>
    <lineage>
        <taxon>Bacteria</taxon>
        <taxon>Bacillati</taxon>
        <taxon>Bacillota</taxon>
        <taxon>Bacilli</taxon>
        <taxon>Bacillales</taxon>
        <taxon>Anoxybacillaceae</taxon>
        <taxon>Geobacillus</taxon>
    </lineage>
</organism>
<keyword id="KW-0029">Amino-acid transport</keyword>
<keyword id="KW-1003">Cell membrane</keyword>
<keyword id="KW-0449">Lipoprotein</keyword>
<keyword id="KW-0472">Membrane</keyword>
<keyword id="KW-0564">Palmitate</keyword>
<keyword id="KW-0732">Signal</keyword>
<keyword id="KW-0813">Transport</keyword>
<evidence type="ECO:0000255" key="1">
    <source>
        <dbReference type="PROSITE-ProRule" id="PRU00303"/>
    </source>
</evidence>
<evidence type="ECO:0000305" key="2"/>
<proteinExistence type="inferred from homology"/>
<accession>P27676</accession>
<name>GLNH_GEOSE</name>
<dbReference type="EMBL" id="M61017">
    <property type="protein sequence ID" value="AAA22484.1"/>
    <property type="molecule type" value="Genomic_DNA"/>
</dbReference>
<dbReference type="PIR" id="B42478">
    <property type="entry name" value="B42478"/>
</dbReference>
<dbReference type="SMR" id="P27676"/>
<dbReference type="GO" id="GO:0005576">
    <property type="term" value="C:extracellular region"/>
    <property type="evidence" value="ECO:0007669"/>
    <property type="project" value="TreeGrafter"/>
</dbReference>
<dbReference type="GO" id="GO:0030288">
    <property type="term" value="C:outer membrane-bounded periplasmic space"/>
    <property type="evidence" value="ECO:0007669"/>
    <property type="project" value="TreeGrafter"/>
</dbReference>
<dbReference type="GO" id="GO:0005886">
    <property type="term" value="C:plasma membrane"/>
    <property type="evidence" value="ECO:0007669"/>
    <property type="project" value="UniProtKB-SubCell"/>
</dbReference>
<dbReference type="GO" id="GO:0015276">
    <property type="term" value="F:ligand-gated monoatomic ion channel activity"/>
    <property type="evidence" value="ECO:0007669"/>
    <property type="project" value="InterPro"/>
</dbReference>
<dbReference type="GO" id="GO:0006865">
    <property type="term" value="P:amino acid transport"/>
    <property type="evidence" value="ECO:0007669"/>
    <property type="project" value="UniProtKB-KW"/>
</dbReference>
<dbReference type="CDD" id="cd01000">
    <property type="entry name" value="PBP2_Cys_DEBP_like"/>
    <property type="match status" value="1"/>
</dbReference>
<dbReference type="Gene3D" id="3.40.190.10">
    <property type="entry name" value="Periplasmic binding protein-like II"/>
    <property type="match status" value="2"/>
</dbReference>
<dbReference type="InterPro" id="IPR051455">
    <property type="entry name" value="Bact_solute-bind_prot3"/>
</dbReference>
<dbReference type="InterPro" id="IPR001320">
    <property type="entry name" value="Iontro_rcpt_C"/>
</dbReference>
<dbReference type="InterPro" id="IPR018313">
    <property type="entry name" value="SBP_3_CS"/>
</dbReference>
<dbReference type="InterPro" id="IPR001638">
    <property type="entry name" value="Solute-binding_3/MltF_N"/>
</dbReference>
<dbReference type="PANTHER" id="PTHR30085:SF6">
    <property type="entry name" value="ABC TRANSPORTER GLUTAMINE-BINDING PROTEIN GLNH"/>
    <property type="match status" value="1"/>
</dbReference>
<dbReference type="PANTHER" id="PTHR30085">
    <property type="entry name" value="AMINO ACID ABC TRANSPORTER PERMEASE"/>
    <property type="match status" value="1"/>
</dbReference>
<dbReference type="Pfam" id="PF00497">
    <property type="entry name" value="SBP_bac_3"/>
    <property type="match status" value="1"/>
</dbReference>
<dbReference type="SMART" id="SM00062">
    <property type="entry name" value="PBPb"/>
    <property type="match status" value="1"/>
</dbReference>
<dbReference type="SMART" id="SM00079">
    <property type="entry name" value="PBPe"/>
    <property type="match status" value="1"/>
</dbReference>
<dbReference type="SUPFAM" id="SSF53850">
    <property type="entry name" value="Periplasmic binding protein-like II"/>
    <property type="match status" value="1"/>
</dbReference>
<dbReference type="PROSITE" id="PS51257">
    <property type="entry name" value="PROKAR_LIPOPROTEIN"/>
    <property type="match status" value="1"/>
</dbReference>
<dbReference type="PROSITE" id="PS01039">
    <property type="entry name" value="SBP_BACTERIAL_3"/>
    <property type="match status" value="1"/>
</dbReference>
<feature type="signal peptide" evidence="1">
    <location>
        <begin position="1"/>
        <end position="26"/>
    </location>
</feature>
<feature type="chain" id="PRO_0000031756" description="Glutamine-binding protein">
    <location>
        <begin position="27"/>
        <end position="262"/>
    </location>
</feature>
<feature type="lipid moiety-binding region" description="N-palmitoyl cysteine" evidence="2">
    <location>
        <position position="27"/>
    </location>
</feature>
<feature type="lipid moiety-binding region" description="S-diacylglycerol cysteine" evidence="2">
    <location>
        <position position="27"/>
    </location>
</feature>